<proteinExistence type="evidence at protein level"/>
<protein>
    <recommendedName>
        <fullName>Tau-tubulin kinase 1</fullName>
        <ecNumber evidence="5">2.7.11.1</ecNumber>
    </recommendedName>
    <alternativeName>
        <fullName>Brain-derived tau kinase</fullName>
    </alternativeName>
</protein>
<reference key="1">
    <citation type="journal article" date="2006" name="J. Neurochem.">
        <title>Tau-tubulin kinase 1 (TTBK1), a neuron-specific tau kinase candidate, is involved in tau phosphorylation and aggregation.</title>
        <authorList>
            <person name="Sato S."/>
            <person name="Cerny R.L."/>
            <person name="Buescher J.L."/>
            <person name="Ikezu T."/>
        </authorList>
    </citation>
    <scope>NUCLEOTIDE SEQUENCE [MRNA] (ISOFORM 1)</scope>
    <scope>FUNCTION</scope>
    <scope>CATALYTIC ACTIVITY</scope>
    <scope>COFACTOR</scope>
    <scope>SUBCELLULAR LOCATION</scope>
    <scope>TISSUE SPECIFICITY</scope>
    <source>
        <tissue>Brain</tissue>
    </source>
</reference>
<reference key="2">
    <citation type="journal article" date="2004" name="Nat. Genet.">
        <title>Complete sequencing and characterization of 21,243 full-length human cDNAs.</title>
        <authorList>
            <person name="Ota T."/>
            <person name="Suzuki Y."/>
            <person name="Nishikawa T."/>
            <person name="Otsuki T."/>
            <person name="Sugiyama T."/>
            <person name="Irie R."/>
            <person name="Wakamatsu A."/>
            <person name="Hayashi K."/>
            <person name="Sato H."/>
            <person name="Nagai K."/>
            <person name="Kimura K."/>
            <person name="Makita H."/>
            <person name="Sekine M."/>
            <person name="Obayashi M."/>
            <person name="Nishi T."/>
            <person name="Shibahara T."/>
            <person name="Tanaka T."/>
            <person name="Ishii S."/>
            <person name="Yamamoto J."/>
            <person name="Saito K."/>
            <person name="Kawai Y."/>
            <person name="Isono Y."/>
            <person name="Nakamura Y."/>
            <person name="Nagahari K."/>
            <person name="Murakami K."/>
            <person name="Yasuda T."/>
            <person name="Iwayanagi T."/>
            <person name="Wagatsuma M."/>
            <person name="Shiratori A."/>
            <person name="Sudo H."/>
            <person name="Hosoiri T."/>
            <person name="Kaku Y."/>
            <person name="Kodaira H."/>
            <person name="Kondo H."/>
            <person name="Sugawara M."/>
            <person name="Takahashi M."/>
            <person name="Kanda K."/>
            <person name="Yokoi T."/>
            <person name="Furuya T."/>
            <person name="Kikkawa E."/>
            <person name="Omura Y."/>
            <person name="Abe K."/>
            <person name="Kamihara K."/>
            <person name="Katsuta N."/>
            <person name="Sato K."/>
            <person name="Tanikawa M."/>
            <person name="Yamazaki M."/>
            <person name="Ninomiya K."/>
            <person name="Ishibashi T."/>
            <person name="Yamashita H."/>
            <person name="Murakawa K."/>
            <person name="Fujimori K."/>
            <person name="Tanai H."/>
            <person name="Kimata M."/>
            <person name="Watanabe M."/>
            <person name="Hiraoka S."/>
            <person name="Chiba Y."/>
            <person name="Ishida S."/>
            <person name="Ono Y."/>
            <person name="Takiguchi S."/>
            <person name="Watanabe S."/>
            <person name="Yosida M."/>
            <person name="Hotuta T."/>
            <person name="Kusano J."/>
            <person name="Kanehori K."/>
            <person name="Takahashi-Fujii A."/>
            <person name="Hara H."/>
            <person name="Tanase T.-O."/>
            <person name="Nomura Y."/>
            <person name="Togiya S."/>
            <person name="Komai F."/>
            <person name="Hara R."/>
            <person name="Takeuchi K."/>
            <person name="Arita M."/>
            <person name="Imose N."/>
            <person name="Musashino K."/>
            <person name="Yuuki H."/>
            <person name="Oshima A."/>
            <person name="Sasaki N."/>
            <person name="Aotsuka S."/>
            <person name="Yoshikawa Y."/>
            <person name="Matsunawa H."/>
            <person name="Ichihara T."/>
            <person name="Shiohata N."/>
            <person name="Sano S."/>
            <person name="Moriya S."/>
            <person name="Momiyama H."/>
            <person name="Satoh N."/>
            <person name="Takami S."/>
            <person name="Terashima Y."/>
            <person name="Suzuki O."/>
            <person name="Nakagawa S."/>
            <person name="Senoh A."/>
            <person name="Mizoguchi H."/>
            <person name="Goto Y."/>
            <person name="Shimizu F."/>
            <person name="Wakebe H."/>
            <person name="Hishigaki H."/>
            <person name="Watanabe T."/>
            <person name="Sugiyama A."/>
            <person name="Takemoto M."/>
            <person name="Kawakami B."/>
            <person name="Yamazaki M."/>
            <person name="Watanabe K."/>
            <person name="Kumagai A."/>
            <person name="Itakura S."/>
            <person name="Fukuzumi Y."/>
            <person name="Fujimori Y."/>
            <person name="Komiyama M."/>
            <person name="Tashiro H."/>
            <person name="Tanigami A."/>
            <person name="Fujiwara T."/>
            <person name="Ono T."/>
            <person name="Yamada K."/>
            <person name="Fujii Y."/>
            <person name="Ozaki K."/>
            <person name="Hirao M."/>
            <person name="Ohmori Y."/>
            <person name="Kawabata A."/>
            <person name="Hikiji T."/>
            <person name="Kobatake N."/>
            <person name="Inagaki H."/>
            <person name="Ikema Y."/>
            <person name="Okamoto S."/>
            <person name="Okitani R."/>
            <person name="Kawakami T."/>
            <person name="Noguchi S."/>
            <person name="Itoh T."/>
            <person name="Shigeta K."/>
            <person name="Senba T."/>
            <person name="Matsumura K."/>
            <person name="Nakajima Y."/>
            <person name="Mizuno T."/>
            <person name="Morinaga M."/>
            <person name="Sasaki M."/>
            <person name="Togashi T."/>
            <person name="Oyama M."/>
            <person name="Hata H."/>
            <person name="Watanabe M."/>
            <person name="Komatsu T."/>
            <person name="Mizushima-Sugano J."/>
            <person name="Satoh T."/>
            <person name="Shirai Y."/>
            <person name="Takahashi Y."/>
            <person name="Nakagawa K."/>
            <person name="Okumura K."/>
            <person name="Nagase T."/>
            <person name="Nomura N."/>
            <person name="Kikuchi H."/>
            <person name="Masuho Y."/>
            <person name="Yamashita R."/>
            <person name="Nakai K."/>
            <person name="Yada T."/>
            <person name="Nakamura Y."/>
            <person name="Ohara O."/>
            <person name="Isogai T."/>
            <person name="Sugano S."/>
        </authorList>
    </citation>
    <scope>NUCLEOTIDE SEQUENCE [LARGE SCALE MRNA] (ISOFORM 2)</scope>
    <source>
        <tissue>Testis</tissue>
    </source>
</reference>
<reference key="3">
    <citation type="journal article" date="2003" name="Nature">
        <title>The DNA sequence and analysis of human chromosome 6.</title>
        <authorList>
            <person name="Mungall A.J."/>
            <person name="Palmer S.A."/>
            <person name="Sims S.K."/>
            <person name="Edwards C.A."/>
            <person name="Ashurst J.L."/>
            <person name="Wilming L."/>
            <person name="Jones M.C."/>
            <person name="Horton R."/>
            <person name="Hunt S.E."/>
            <person name="Scott C.E."/>
            <person name="Gilbert J.G.R."/>
            <person name="Clamp M.E."/>
            <person name="Bethel G."/>
            <person name="Milne S."/>
            <person name="Ainscough R."/>
            <person name="Almeida J.P."/>
            <person name="Ambrose K.D."/>
            <person name="Andrews T.D."/>
            <person name="Ashwell R.I.S."/>
            <person name="Babbage A.K."/>
            <person name="Bagguley C.L."/>
            <person name="Bailey J."/>
            <person name="Banerjee R."/>
            <person name="Barker D.J."/>
            <person name="Barlow K.F."/>
            <person name="Bates K."/>
            <person name="Beare D.M."/>
            <person name="Beasley H."/>
            <person name="Beasley O."/>
            <person name="Bird C.P."/>
            <person name="Blakey S.E."/>
            <person name="Bray-Allen S."/>
            <person name="Brook J."/>
            <person name="Brown A.J."/>
            <person name="Brown J.Y."/>
            <person name="Burford D.C."/>
            <person name="Burrill W."/>
            <person name="Burton J."/>
            <person name="Carder C."/>
            <person name="Carter N.P."/>
            <person name="Chapman J.C."/>
            <person name="Clark S.Y."/>
            <person name="Clark G."/>
            <person name="Clee C.M."/>
            <person name="Clegg S."/>
            <person name="Cobley V."/>
            <person name="Collier R.E."/>
            <person name="Collins J.E."/>
            <person name="Colman L.K."/>
            <person name="Corby N.R."/>
            <person name="Coville G.J."/>
            <person name="Culley K.M."/>
            <person name="Dhami P."/>
            <person name="Davies J."/>
            <person name="Dunn M."/>
            <person name="Earthrowl M.E."/>
            <person name="Ellington A.E."/>
            <person name="Evans K.A."/>
            <person name="Faulkner L."/>
            <person name="Francis M.D."/>
            <person name="Frankish A."/>
            <person name="Frankland J."/>
            <person name="French L."/>
            <person name="Garner P."/>
            <person name="Garnett J."/>
            <person name="Ghori M.J."/>
            <person name="Gilby L.M."/>
            <person name="Gillson C.J."/>
            <person name="Glithero R.J."/>
            <person name="Grafham D.V."/>
            <person name="Grant M."/>
            <person name="Gribble S."/>
            <person name="Griffiths C."/>
            <person name="Griffiths M.N.D."/>
            <person name="Hall R."/>
            <person name="Halls K.S."/>
            <person name="Hammond S."/>
            <person name="Harley J.L."/>
            <person name="Hart E.A."/>
            <person name="Heath P.D."/>
            <person name="Heathcott R."/>
            <person name="Holmes S.J."/>
            <person name="Howden P.J."/>
            <person name="Howe K.L."/>
            <person name="Howell G.R."/>
            <person name="Huckle E."/>
            <person name="Humphray S.J."/>
            <person name="Humphries M.D."/>
            <person name="Hunt A.R."/>
            <person name="Johnson C.M."/>
            <person name="Joy A.A."/>
            <person name="Kay M."/>
            <person name="Keenan S.J."/>
            <person name="Kimberley A.M."/>
            <person name="King A."/>
            <person name="Laird G.K."/>
            <person name="Langford C."/>
            <person name="Lawlor S."/>
            <person name="Leongamornlert D.A."/>
            <person name="Leversha M."/>
            <person name="Lloyd C.R."/>
            <person name="Lloyd D.M."/>
            <person name="Loveland J.E."/>
            <person name="Lovell J."/>
            <person name="Martin S."/>
            <person name="Mashreghi-Mohammadi M."/>
            <person name="Maslen G.L."/>
            <person name="Matthews L."/>
            <person name="McCann O.T."/>
            <person name="McLaren S.J."/>
            <person name="McLay K."/>
            <person name="McMurray A."/>
            <person name="Moore M.J.F."/>
            <person name="Mullikin J.C."/>
            <person name="Niblett D."/>
            <person name="Nickerson T."/>
            <person name="Novik K.L."/>
            <person name="Oliver K."/>
            <person name="Overton-Larty E.K."/>
            <person name="Parker A."/>
            <person name="Patel R."/>
            <person name="Pearce A.V."/>
            <person name="Peck A.I."/>
            <person name="Phillimore B.J.C.T."/>
            <person name="Phillips S."/>
            <person name="Plumb R.W."/>
            <person name="Porter K.M."/>
            <person name="Ramsey Y."/>
            <person name="Ranby S.A."/>
            <person name="Rice C.M."/>
            <person name="Ross M.T."/>
            <person name="Searle S.M."/>
            <person name="Sehra H.K."/>
            <person name="Sheridan E."/>
            <person name="Skuce C.D."/>
            <person name="Smith S."/>
            <person name="Smith M."/>
            <person name="Spraggon L."/>
            <person name="Squares S.L."/>
            <person name="Steward C.A."/>
            <person name="Sycamore N."/>
            <person name="Tamlyn-Hall G."/>
            <person name="Tester J."/>
            <person name="Theaker A.J."/>
            <person name="Thomas D.W."/>
            <person name="Thorpe A."/>
            <person name="Tracey A."/>
            <person name="Tromans A."/>
            <person name="Tubby B."/>
            <person name="Wall M."/>
            <person name="Wallis J.M."/>
            <person name="West A.P."/>
            <person name="White S.S."/>
            <person name="Whitehead S.L."/>
            <person name="Whittaker H."/>
            <person name="Wild A."/>
            <person name="Willey D.J."/>
            <person name="Wilmer T.E."/>
            <person name="Wood J.M."/>
            <person name="Wray P.W."/>
            <person name="Wyatt J.C."/>
            <person name="Young L."/>
            <person name="Younger R.M."/>
            <person name="Bentley D.R."/>
            <person name="Coulson A."/>
            <person name="Durbin R.M."/>
            <person name="Hubbard T."/>
            <person name="Sulston J.E."/>
            <person name="Dunham I."/>
            <person name="Rogers J."/>
            <person name="Beck S."/>
        </authorList>
    </citation>
    <scope>NUCLEOTIDE SEQUENCE [LARGE SCALE GENOMIC DNA]</scope>
</reference>
<reference key="4">
    <citation type="journal article" date="2001" name="DNA Res.">
        <title>Prediction of the coding sequences of unidentified human genes. XX. The complete sequences of 100 new cDNA clones from brain which code for large proteins in vitro.</title>
        <authorList>
            <person name="Nagase T."/>
            <person name="Nakayama M."/>
            <person name="Nakajima D."/>
            <person name="Kikuno R."/>
            <person name="Ohara O."/>
        </authorList>
    </citation>
    <scope>NUCLEOTIDE SEQUENCE [LARGE SCALE MRNA] OF 52-1321 (ISOFORM 1)</scope>
    <source>
        <tissue>Brain</tissue>
    </source>
</reference>
<reference key="5">
    <citation type="journal article" date="2004" name="Genome Res.">
        <title>The status, quality, and expansion of the NIH full-length cDNA project: the Mammalian Gene Collection (MGC).</title>
        <authorList>
            <consortium name="The MGC Project Team"/>
        </authorList>
    </citation>
    <scope>NUCLEOTIDE SEQUENCE [LARGE SCALE MRNA] OF 979-1321 (ISOFORM 1)</scope>
    <source>
        <tissue>Brain</tissue>
    </source>
</reference>
<reference key="6">
    <citation type="journal article" date="2007" name="Nature">
        <title>Patterns of somatic mutation in human cancer genomes.</title>
        <authorList>
            <person name="Greenman C."/>
            <person name="Stephens P."/>
            <person name="Smith R."/>
            <person name="Dalgliesh G.L."/>
            <person name="Hunter C."/>
            <person name="Bignell G."/>
            <person name="Davies H."/>
            <person name="Teague J."/>
            <person name="Butler A."/>
            <person name="Stevens C."/>
            <person name="Edkins S."/>
            <person name="O'Meara S."/>
            <person name="Vastrik I."/>
            <person name="Schmidt E.E."/>
            <person name="Avis T."/>
            <person name="Barthorpe S."/>
            <person name="Bhamra G."/>
            <person name="Buck G."/>
            <person name="Choudhury B."/>
            <person name="Clements J."/>
            <person name="Cole J."/>
            <person name="Dicks E."/>
            <person name="Forbes S."/>
            <person name="Gray K."/>
            <person name="Halliday K."/>
            <person name="Harrison R."/>
            <person name="Hills K."/>
            <person name="Hinton J."/>
            <person name="Jenkinson A."/>
            <person name="Jones D."/>
            <person name="Menzies A."/>
            <person name="Mironenko T."/>
            <person name="Perry J."/>
            <person name="Raine K."/>
            <person name="Richardson D."/>
            <person name="Shepherd R."/>
            <person name="Small A."/>
            <person name="Tofts C."/>
            <person name="Varian J."/>
            <person name="Webb T."/>
            <person name="West S."/>
            <person name="Widaa S."/>
            <person name="Yates A."/>
            <person name="Cahill D.P."/>
            <person name="Louis D.N."/>
            <person name="Goldstraw P."/>
            <person name="Nicholson A.G."/>
            <person name="Brasseur F."/>
            <person name="Looijenga L."/>
            <person name="Weber B.L."/>
            <person name="Chiew Y.-E."/>
            <person name="DeFazio A."/>
            <person name="Greaves M.F."/>
            <person name="Green A.R."/>
            <person name="Campbell P."/>
            <person name="Birney E."/>
            <person name="Easton D.F."/>
            <person name="Chenevix-Trench G."/>
            <person name="Tan M.-H."/>
            <person name="Khoo S.K."/>
            <person name="Teh B.T."/>
            <person name="Yuen S.T."/>
            <person name="Leung S.Y."/>
            <person name="Wooster R."/>
            <person name="Futreal P.A."/>
            <person name="Stratton M.R."/>
        </authorList>
    </citation>
    <scope>VARIANTS [LARGE SCALE ANALYSIS] LEU-613; ALA-623; ARG-649; GLU-741; ASP-744; PHE-806; SER-855; ARG-1145 AND SER-1184</scope>
</reference>
<keyword id="KW-0002">3D-structure</keyword>
<keyword id="KW-0025">Alternative splicing</keyword>
<keyword id="KW-0067">ATP-binding</keyword>
<keyword id="KW-0175">Coiled coil</keyword>
<keyword id="KW-0963">Cytoplasm</keyword>
<keyword id="KW-0418">Kinase</keyword>
<keyword id="KW-0547">Nucleotide-binding</keyword>
<keyword id="KW-0597">Phosphoprotein</keyword>
<keyword id="KW-1267">Proteomics identification</keyword>
<keyword id="KW-1185">Reference proteome</keyword>
<keyword id="KW-0723">Serine/threonine-protein kinase</keyword>
<keyword id="KW-0808">Transferase</keyword>
<name>TTBK1_HUMAN</name>
<gene>
    <name type="primary">TTBK1</name>
    <name type="synonym">BDTK</name>
    <name type="synonym">KIAA1855</name>
</gene>
<accession>Q5TCY1</accession>
<accession>A2A2U5</accession>
<accession>Q2L6C6</accession>
<accession>Q6ZNH0</accession>
<accession>Q8N444</accession>
<accession>Q96JH2</accession>
<comment type="function">
    <text evidence="5">Serine/threonine kinase which is able to phosphorylate TAU on serine, threonine and tyrosine residues. Induces aggregation of TAU.</text>
</comment>
<comment type="catalytic activity">
    <reaction evidence="5">
        <text>L-seryl-[protein] + ATP = O-phospho-L-seryl-[protein] + ADP + H(+)</text>
        <dbReference type="Rhea" id="RHEA:17989"/>
        <dbReference type="Rhea" id="RHEA-COMP:9863"/>
        <dbReference type="Rhea" id="RHEA-COMP:11604"/>
        <dbReference type="ChEBI" id="CHEBI:15378"/>
        <dbReference type="ChEBI" id="CHEBI:29999"/>
        <dbReference type="ChEBI" id="CHEBI:30616"/>
        <dbReference type="ChEBI" id="CHEBI:83421"/>
        <dbReference type="ChEBI" id="CHEBI:456216"/>
        <dbReference type="EC" id="2.7.11.1"/>
    </reaction>
</comment>
<comment type="catalytic activity">
    <reaction evidence="5">
        <text>L-threonyl-[protein] + ATP = O-phospho-L-threonyl-[protein] + ADP + H(+)</text>
        <dbReference type="Rhea" id="RHEA:46608"/>
        <dbReference type="Rhea" id="RHEA-COMP:11060"/>
        <dbReference type="Rhea" id="RHEA-COMP:11605"/>
        <dbReference type="ChEBI" id="CHEBI:15378"/>
        <dbReference type="ChEBI" id="CHEBI:30013"/>
        <dbReference type="ChEBI" id="CHEBI:30616"/>
        <dbReference type="ChEBI" id="CHEBI:61977"/>
        <dbReference type="ChEBI" id="CHEBI:456216"/>
        <dbReference type="EC" id="2.7.11.1"/>
    </reaction>
</comment>
<comment type="cofactor">
    <cofactor evidence="5">
        <name>Mg(2+)</name>
        <dbReference type="ChEBI" id="CHEBI:18420"/>
    </cofactor>
    <cofactor evidence="5">
        <name>Mn(2+)</name>
        <dbReference type="ChEBI" id="CHEBI:29035"/>
    </cofactor>
    <text evidence="5">Divalent metal cations. Mg(2+) or, to a lesser extent, Mn(2+), but not Ca(2+) or Zn(2+).</text>
</comment>
<comment type="subcellular location">
    <subcellularLocation>
        <location evidence="5">Cytoplasm</location>
    </subcellularLocation>
</comment>
<comment type="alternative products">
    <event type="alternative splicing"/>
    <isoform>
        <id>Q5TCY1-1</id>
        <name>1</name>
        <sequence type="displayed"/>
    </isoform>
    <isoform>
        <id>Q5TCY1-2</id>
        <name>2</name>
        <sequence type="described" ref="VSP_026497 VSP_026498 VSP_026499"/>
    </isoform>
</comment>
<comment type="tissue specificity">
    <text evidence="5">Expressed in the brain, particularly in cortical and hippocampal neurons. Weakly expressed in spinal cord and testis. No expression in adipose tissue, bladder, cervix, colon, esophagus, heart, kidney, liver, lung, ovary, placenta, prostate, skeletal muscle, small intestine, spleen, testis, thymus, thyroid or trachea.</text>
</comment>
<comment type="similarity">
    <text evidence="8">Belongs to the protein kinase superfamily. CK1 Ser/Thr protein kinase family.</text>
</comment>
<comment type="caution">
    <text evidence="8">It is uncertain whether Met-1 or Met-14 is the initiator.</text>
</comment>
<sequence length="1321" mass="142737">MQCLAAALKDETNMSGGGEQADILPANYVVKDRWKVLKKIGGGGFGEIYEAMDLLTRENVALKVESAQQPKQVLKMEVAVLKKLQGKDHVCRFIGCGRNEKFNYVVMQLQGRNLADLRRSQPRGTFTLSTTLRLGKQILESIEAIHSVGFLHRDIKPSNFAMGRLPSTYRKCYMLDFGLARQYTNTTGDVRPPRNVAGFRGTVRYASVNAHKNREMGRHDDLWSLFYMLVEFAVGQLPWRKIKDKEQVGMIKEKYEHRMLLKHMPSEFHLFLDHIASLDYFTKPDYQLIMSVFENSMKERGIAENEAFDWEKAGTDALLSTSTSTPPQQNTRQTAAMFGVVNVTPVPGDLLRENTEDVLQGEHLSDQENAPPILPGRPSEGLGPSPHLVPHPGGPEAEVWEETDVNRNKLRINIGKSPCVEEEQSRGMGVPSSPVRAPPDSPTTPVRSLRYRRVNSPESERLSTADGRVELPERRSRMDLPGSPSRQACSSQPAQMLSVDTGHADRQASGRMDVSASVEQEALSNAFRSVPLAEEEDFDSKEWVIIDKETELKDFPPGAEPSTSGTTDEEPEELRPLPEEGEERRRLGAEPTVRPRGRSMQALAEEDLQHLPPQPLPPQLSQGDGRSETSQPPTPGSPSHSPLHSGPRPRRRESDPTGPQRQVFSVAPPFEVNGLPRAVPLSLPYQDFKRDLSDYRERARLLNRVRRVGFSHMLLTTPQVPLAPVQPQANGKEEEEEEEEDEEEEEEDEEEEEEEEEEEEEEEEEEEEEEEAAAAVALGEVLGPRSGSSSEGSERSTDRSQEGAPSTLLADDQKESRGRASMADGDLEPEEGSKTLVLVSPGDMKKSPVTAELAPDPDLGTLAALTPQHERPQPTGSQLDVSEPGTLSSVLKSEPKPPGPGAGLGAGTVTTGVGGVAVTSSPFTKVERTFVHIAEKTHLNVMSSGGQALRSEEFSAGGELGLELASDGGAVEEGARAPLENGLALSGLNGAEIEGSALSGAPRETPSEMATNSLPNGPALADGPAPVSPLEPSPEKVATISPRRHAMPGSRPRSRIPVLLSEEDTGSEPSGSLSAKERWSKRARPQQDLARLVMEKRQGRLLLRLASGASSSSSEEQRRASETLSGTGSEEDTPASEPAAALPRKSGRAAATRSRIPRPIGLRMPMPVAAQQPASRSHGAAPALDTAITSRLQLQTPPGSATAADLRPKQPPGRGLGPGRAQAGARPPAPRSPRLPASTSAARNASASPRSQSLSRRESPSPSHQARPGVPPPRGVPPARAQPDGTPSPGGSKKGPRGKLQAQRATTKGRAGGAEGRAGAR</sequence>
<organism>
    <name type="scientific">Homo sapiens</name>
    <name type="common">Human</name>
    <dbReference type="NCBI Taxonomy" id="9606"/>
    <lineage>
        <taxon>Eukaryota</taxon>
        <taxon>Metazoa</taxon>
        <taxon>Chordata</taxon>
        <taxon>Craniata</taxon>
        <taxon>Vertebrata</taxon>
        <taxon>Euteleostomi</taxon>
        <taxon>Mammalia</taxon>
        <taxon>Eutheria</taxon>
        <taxon>Euarchontoglires</taxon>
        <taxon>Primates</taxon>
        <taxon>Haplorrhini</taxon>
        <taxon>Catarrhini</taxon>
        <taxon>Hominidae</taxon>
        <taxon>Homo</taxon>
    </lineage>
</organism>
<dbReference type="EC" id="2.7.11.1" evidence="5"/>
<dbReference type="EMBL" id="AB218664">
    <property type="protein sequence ID" value="BAE78660.1"/>
    <property type="molecule type" value="mRNA"/>
</dbReference>
<dbReference type="EMBL" id="AK131217">
    <property type="protein sequence ID" value="BAD18405.1"/>
    <property type="molecule type" value="mRNA"/>
</dbReference>
<dbReference type="EMBL" id="AL133375">
    <property type="status" value="NOT_ANNOTATED_CDS"/>
    <property type="molecule type" value="Genomic_DNA"/>
</dbReference>
<dbReference type="EMBL" id="AB058758">
    <property type="protein sequence ID" value="BAB47484.1"/>
    <property type="molecule type" value="mRNA"/>
</dbReference>
<dbReference type="EMBL" id="BC036764">
    <property type="protein sequence ID" value="AAH36764.1"/>
    <property type="molecule type" value="mRNA"/>
</dbReference>
<dbReference type="CCDS" id="CCDS34455.1">
    <molecule id="Q5TCY1-1"/>
</dbReference>
<dbReference type="RefSeq" id="NP_115927.1">
    <molecule id="Q5TCY1-1"/>
    <property type="nucleotide sequence ID" value="NM_032538.3"/>
</dbReference>
<dbReference type="PDB" id="4BTJ">
    <property type="method" value="X-ray"/>
    <property type="resolution" value="2.16 A"/>
    <property type="chains" value="A/B=1-313"/>
</dbReference>
<dbReference type="PDB" id="4BTK">
    <property type="method" value="X-ray"/>
    <property type="resolution" value="2.00 A"/>
    <property type="chains" value="A=1-313"/>
</dbReference>
<dbReference type="PDB" id="4BTM">
    <property type="method" value="X-ray"/>
    <property type="resolution" value="2.54 A"/>
    <property type="chains" value="A/B=1-313"/>
</dbReference>
<dbReference type="PDB" id="4NFM">
    <property type="method" value="X-ray"/>
    <property type="resolution" value="2.12 A"/>
    <property type="chains" value="A=14-343"/>
</dbReference>
<dbReference type="PDB" id="4NFN">
    <property type="method" value="X-ray"/>
    <property type="resolution" value="1.42 A"/>
    <property type="chains" value="A=14-320"/>
</dbReference>
<dbReference type="PDB" id="7JXX">
    <property type="method" value="X-ray"/>
    <property type="resolution" value="1.56 A"/>
    <property type="chains" value="A=15-343"/>
</dbReference>
<dbReference type="PDB" id="7JXY">
    <property type="method" value="X-ray"/>
    <property type="resolution" value="2.15 A"/>
    <property type="chains" value="A/B=15-343"/>
</dbReference>
<dbReference type="PDB" id="7Q8V">
    <property type="method" value="X-ray"/>
    <property type="resolution" value="2.13 A"/>
    <property type="chains" value="A=13-320"/>
</dbReference>
<dbReference type="PDB" id="7Q8W">
    <property type="method" value="X-ray"/>
    <property type="resolution" value="2.02 A"/>
    <property type="chains" value="A=13-320"/>
</dbReference>
<dbReference type="PDB" id="7QHW">
    <property type="method" value="X-ray"/>
    <property type="resolution" value="2.80 A"/>
    <property type="chains" value="AAA/CCC=21-313"/>
</dbReference>
<dbReference type="PDB" id="7ZHN">
    <property type="method" value="X-ray"/>
    <property type="resolution" value="1.85 A"/>
    <property type="chains" value="A=13-320"/>
</dbReference>
<dbReference type="PDB" id="7ZHO">
    <property type="method" value="X-ray"/>
    <property type="resolution" value="2.08 A"/>
    <property type="chains" value="A=13-320"/>
</dbReference>
<dbReference type="PDB" id="7ZHP">
    <property type="method" value="X-ray"/>
    <property type="resolution" value="1.80 A"/>
    <property type="chains" value="A=13-320"/>
</dbReference>
<dbReference type="PDB" id="7ZHQ">
    <property type="method" value="X-ray"/>
    <property type="resolution" value="1.80 A"/>
    <property type="chains" value="A=13-320"/>
</dbReference>
<dbReference type="PDB" id="8XPZ">
    <property type="method" value="X-ray"/>
    <property type="resolution" value="2.60 A"/>
    <property type="chains" value="A=14-343"/>
</dbReference>
<dbReference type="PDB" id="9HHW">
    <property type="method" value="X-ray"/>
    <property type="resolution" value="3.00 A"/>
    <property type="chains" value="A=13-320"/>
</dbReference>
<dbReference type="PDBsum" id="4BTJ"/>
<dbReference type="PDBsum" id="4BTK"/>
<dbReference type="PDBsum" id="4BTM"/>
<dbReference type="PDBsum" id="4NFM"/>
<dbReference type="PDBsum" id="4NFN"/>
<dbReference type="PDBsum" id="7JXX"/>
<dbReference type="PDBsum" id="7JXY"/>
<dbReference type="PDBsum" id="7Q8V"/>
<dbReference type="PDBsum" id="7Q8W"/>
<dbReference type="PDBsum" id="7QHW"/>
<dbReference type="PDBsum" id="7ZHN"/>
<dbReference type="PDBsum" id="7ZHO"/>
<dbReference type="PDBsum" id="7ZHP"/>
<dbReference type="PDBsum" id="7ZHQ"/>
<dbReference type="PDBsum" id="8XPZ"/>
<dbReference type="PDBsum" id="9HHW"/>
<dbReference type="SMR" id="Q5TCY1"/>
<dbReference type="BioGRID" id="124159">
    <property type="interactions" value="29"/>
</dbReference>
<dbReference type="FunCoup" id="Q5TCY1">
    <property type="interactions" value="1651"/>
</dbReference>
<dbReference type="IntAct" id="Q5TCY1">
    <property type="interactions" value="18"/>
</dbReference>
<dbReference type="STRING" id="9606.ENSP00000259750"/>
<dbReference type="BindingDB" id="Q5TCY1"/>
<dbReference type="ChEMBL" id="CHEMBL1926492"/>
<dbReference type="GuidetoPHARMACOLOGY" id="2262"/>
<dbReference type="GlyGen" id="Q5TCY1">
    <property type="glycosylation" value="4 sites, 1 O-linked glycan (2 sites)"/>
</dbReference>
<dbReference type="iPTMnet" id="Q5TCY1"/>
<dbReference type="PhosphoSitePlus" id="Q5TCY1"/>
<dbReference type="BioMuta" id="TTBK1"/>
<dbReference type="DMDM" id="97203020"/>
<dbReference type="jPOST" id="Q5TCY1"/>
<dbReference type="MassIVE" id="Q5TCY1"/>
<dbReference type="PaxDb" id="9606-ENSP00000259750"/>
<dbReference type="PeptideAtlas" id="Q5TCY1"/>
<dbReference type="ProteomicsDB" id="64995">
    <molecule id="Q5TCY1-1"/>
</dbReference>
<dbReference type="ProteomicsDB" id="64996">
    <molecule id="Q5TCY1-2"/>
</dbReference>
<dbReference type="Antibodypedia" id="30359">
    <property type="antibodies" value="183 antibodies from 30 providers"/>
</dbReference>
<dbReference type="DNASU" id="84630"/>
<dbReference type="Ensembl" id="ENST00000259750.9">
    <molecule id="Q5TCY1-1"/>
    <property type="protein sequence ID" value="ENSP00000259750.4"/>
    <property type="gene ID" value="ENSG00000146216.14"/>
</dbReference>
<dbReference type="GeneID" id="84630"/>
<dbReference type="KEGG" id="hsa:84630"/>
<dbReference type="MANE-Select" id="ENST00000259750.9">
    <property type="protein sequence ID" value="ENSP00000259750.4"/>
    <property type="RefSeq nucleotide sequence ID" value="NM_032538.3"/>
    <property type="RefSeq protein sequence ID" value="NP_115927.1"/>
</dbReference>
<dbReference type="UCSC" id="uc003ouq.2">
    <molecule id="Q5TCY1-1"/>
    <property type="organism name" value="human"/>
</dbReference>
<dbReference type="AGR" id="HGNC:19140"/>
<dbReference type="CTD" id="84630"/>
<dbReference type="DisGeNET" id="84630"/>
<dbReference type="GeneCards" id="TTBK1"/>
<dbReference type="HGNC" id="HGNC:19140">
    <property type="gene designation" value="TTBK1"/>
</dbReference>
<dbReference type="HPA" id="ENSG00000146216">
    <property type="expression patterns" value="Group enriched (brain, pituitary gland)"/>
</dbReference>
<dbReference type="MalaCards" id="TTBK1"/>
<dbReference type="MIM" id="619415">
    <property type="type" value="gene"/>
</dbReference>
<dbReference type="neXtProt" id="NX_Q5TCY1"/>
<dbReference type="OpenTargets" id="ENSG00000146216"/>
<dbReference type="PharmGKB" id="PA134866142"/>
<dbReference type="VEuPathDB" id="HostDB:ENSG00000146216"/>
<dbReference type="eggNOG" id="KOG1164">
    <property type="taxonomic scope" value="Eukaryota"/>
</dbReference>
<dbReference type="GeneTree" id="ENSGT00940000160981"/>
<dbReference type="HOGENOM" id="CLU_003410_0_0_1"/>
<dbReference type="InParanoid" id="Q5TCY1"/>
<dbReference type="OMA" id="KERWNKR"/>
<dbReference type="OrthoDB" id="5979581at2759"/>
<dbReference type="PAN-GO" id="Q5TCY1">
    <property type="GO annotations" value="6 GO annotations based on evolutionary models"/>
</dbReference>
<dbReference type="PhylomeDB" id="Q5TCY1"/>
<dbReference type="TreeFam" id="TF351646"/>
<dbReference type="BRENDA" id="2.7.11.26">
    <property type="organism ID" value="2681"/>
</dbReference>
<dbReference type="PathwayCommons" id="Q5TCY1"/>
<dbReference type="SignaLink" id="Q5TCY1"/>
<dbReference type="SIGNOR" id="Q5TCY1"/>
<dbReference type="BioGRID-ORCS" id="84630">
    <property type="hits" value="14 hits in 1179 CRISPR screens"/>
</dbReference>
<dbReference type="ChiTaRS" id="TTBK1">
    <property type="organism name" value="human"/>
</dbReference>
<dbReference type="EvolutionaryTrace" id="Q5TCY1"/>
<dbReference type="GenomeRNAi" id="84630"/>
<dbReference type="Pharos" id="Q5TCY1">
    <property type="development level" value="Tbio"/>
</dbReference>
<dbReference type="PRO" id="PR:Q5TCY1"/>
<dbReference type="Proteomes" id="UP000005640">
    <property type="component" value="Chromosome 6"/>
</dbReference>
<dbReference type="RNAct" id="Q5TCY1">
    <property type="molecule type" value="protein"/>
</dbReference>
<dbReference type="Bgee" id="ENSG00000146216">
    <property type="expression patterns" value="Expressed in lateral nuclear group of thalamus and 99 other cell types or tissues"/>
</dbReference>
<dbReference type="ExpressionAtlas" id="Q5TCY1">
    <property type="expression patterns" value="baseline and differential"/>
</dbReference>
<dbReference type="GO" id="GO:0005737">
    <property type="term" value="C:cytoplasm"/>
    <property type="evidence" value="ECO:0000318"/>
    <property type="project" value="GO_Central"/>
</dbReference>
<dbReference type="GO" id="GO:0005829">
    <property type="term" value="C:cytosol"/>
    <property type="evidence" value="ECO:0000314"/>
    <property type="project" value="HPA"/>
</dbReference>
<dbReference type="GO" id="GO:0005875">
    <property type="term" value="C:microtubule associated complex"/>
    <property type="evidence" value="ECO:0000305"/>
    <property type="project" value="ARUK-UCL"/>
</dbReference>
<dbReference type="GO" id="GO:0043025">
    <property type="term" value="C:neuronal cell body"/>
    <property type="evidence" value="ECO:0000314"/>
    <property type="project" value="ARUK-UCL"/>
</dbReference>
<dbReference type="GO" id="GO:0005654">
    <property type="term" value="C:nucleoplasm"/>
    <property type="evidence" value="ECO:0000314"/>
    <property type="project" value="HPA"/>
</dbReference>
<dbReference type="GO" id="GO:0005634">
    <property type="term" value="C:nucleus"/>
    <property type="evidence" value="ECO:0000318"/>
    <property type="project" value="GO_Central"/>
</dbReference>
<dbReference type="GO" id="GO:0048471">
    <property type="term" value="C:perinuclear region of cytoplasm"/>
    <property type="evidence" value="ECO:0000250"/>
    <property type="project" value="ARUK-UCL"/>
</dbReference>
<dbReference type="GO" id="GO:0005524">
    <property type="term" value="F:ATP binding"/>
    <property type="evidence" value="ECO:0007669"/>
    <property type="project" value="UniProtKB-KW"/>
</dbReference>
<dbReference type="GO" id="GO:0106310">
    <property type="term" value="F:protein serine kinase activity"/>
    <property type="evidence" value="ECO:0000316"/>
    <property type="project" value="ARUK-UCL"/>
</dbReference>
<dbReference type="GO" id="GO:0004674">
    <property type="term" value="F:protein serine/threonine kinase activity"/>
    <property type="evidence" value="ECO:0000314"/>
    <property type="project" value="ARUK-UCL"/>
</dbReference>
<dbReference type="GO" id="GO:0004713">
    <property type="term" value="F:protein tyrosine kinase activity"/>
    <property type="evidence" value="ECO:0000314"/>
    <property type="project" value="ARUK-UCL"/>
</dbReference>
<dbReference type="GO" id="GO:0048156">
    <property type="term" value="F:tau protein binding"/>
    <property type="evidence" value="ECO:0000353"/>
    <property type="project" value="ARUK-UCL"/>
</dbReference>
<dbReference type="GO" id="GO:0050321">
    <property type="term" value="F:tau-protein kinase activity"/>
    <property type="evidence" value="ECO:0000314"/>
    <property type="project" value="ARUK-UCL"/>
</dbReference>
<dbReference type="GO" id="GO:0007611">
    <property type="term" value="P:learning or memory"/>
    <property type="evidence" value="ECO:0000315"/>
    <property type="project" value="ARUK-UCL"/>
</dbReference>
<dbReference type="GO" id="GO:0010629">
    <property type="term" value="P:negative regulation of gene expression"/>
    <property type="evidence" value="ECO:0000315"/>
    <property type="project" value="ARUK-UCL"/>
</dbReference>
<dbReference type="GO" id="GO:0018105">
    <property type="term" value="P:peptidyl-serine phosphorylation"/>
    <property type="evidence" value="ECO:0000314"/>
    <property type="project" value="ARUK-UCL"/>
</dbReference>
<dbReference type="GO" id="GO:0018107">
    <property type="term" value="P:peptidyl-threonine phosphorylation"/>
    <property type="evidence" value="ECO:0000314"/>
    <property type="project" value="ARUK-UCL"/>
</dbReference>
<dbReference type="GO" id="GO:0018108">
    <property type="term" value="P:peptidyl-tyrosine phosphorylation"/>
    <property type="evidence" value="ECO:0000314"/>
    <property type="project" value="ARUK-UCL"/>
</dbReference>
<dbReference type="GO" id="GO:0061890">
    <property type="term" value="P:positive regulation of astrocyte activation"/>
    <property type="evidence" value="ECO:0000305"/>
    <property type="project" value="ARUK-UCL"/>
</dbReference>
<dbReference type="GO" id="GO:0010628">
    <property type="term" value="P:positive regulation of gene expression"/>
    <property type="evidence" value="ECO:0000315"/>
    <property type="project" value="ARUK-UCL"/>
</dbReference>
<dbReference type="GO" id="GO:1903980">
    <property type="term" value="P:positive regulation of microglial cell activation"/>
    <property type="evidence" value="ECO:0000315"/>
    <property type="project" value="ARUK-UCL"/>
</dbReference>
<dbReference type="GO" id="GO:0032273">
    <property type="term" value="P:positive regulation of protein polymerization"/>
    <property type="evidence" value="ECO:0000314"/>
    <property type="project" value="ARUK-UCL"/>
</dbReference>
<dbReference type="GO" id="GO:0007165">
    <property type="term" value="P:signal transduction"/>
    <property type="evidence" value="ECO:0000318"/>
    <property type="project" value="GO_Central"/>
</dbReference>
<dbReference type="GO" id="GO:0021762">
    <property type="term" value="P:substantia nigra development"/>
    <property type="evidence" value="ECO:0007007"/>
    <property type="project" value="UniProtKB"/>
</dbReference>
<dbReference type="CDD" id="cd14130">
    <property type="entry name" value="STKc_TTBK1"/>
    <property type="match status" value="1"/>
</dbReference>
<dbReference type="FunFam" id="1.10.510.10:FF:000167">
    <property type="entry name" value="Tau tubulin kinase 1"/>
    <property type="match status" value="1"/>
</dbReference>
<dbReference type="FunFam" id="3.30.200.20:FF:000358">
    <property type="entry name" value="Tau tubulin kinase 2b"/>
    <property type="match status" value="1"/>
</dbReference>
<dbReference type="Gene3D" id="1.10.510.10">
    <property type="entry name" value="Transferase(Phosphotransferase) domain 1"/>
    <property type="match status" value="1"/>
</dbReference>
<dbReference type="InterPro" id="IPR050235">
    <property type="entry name" value="CK1_Ser-Thr_kinase"/>
</dbReference>
<dbReference type="InterPro" id="IPR011009">
    <property type="entry name" value="Kinase-like_dom_sf"/>
</dbReference>
<dbReference type="InterPro" id="IPR000719">
    <property type="entry name" value="Prot_kinase_dom"/>
</dbReference>
<dbReference type="InterPro" id="IPR017441">
    <property type="entry name" value="Protein_kinase_ATP_BS"/>
</dbReference>
<dbReference type="InterPro" id="IPR042714">
    <property type="entry name" value="TTBK1_STKc"/>
</dbReference>
<dbReference type="PANTHER" id="PTHR11909">
    <property type="entry name" value="CASEIN KINASE-RELATED"/>
    <property type="match status" value="1"/>
</dbReference>
<dbReference type="Pfam" id="PF00069">
    <property type="entry name" value="Pkinase"/>
    <property type="match status" value="1"/>
</dbReference>
<dbReference type="SMART" id="SM00220">
    <property type="entry name" value="S_TKc"/>
    <property type="match status" value="1"/>
</dbReference>
<dbReference type="SUPFAM" id="SSF56112">
    <property type="entry name" value="Protein kinase-like (PK-like)"/>
    <property type="match status" value="1"/>
</dbReference>
<dbReference type="PROSITE" id="PS00107">
    <property type="entry name" value="PROTEIN_KINASE_ATP"/>
    <property type="match status" value="1"/>
</dbReference>
<dbReference type="PROSITE" id="PS50011">
    <property type="entry name" value="PROTEIN_KINASE_DOM"/>
    <property type="match status" value="1"/>
</dbReference>
<feature type="chain" id="PRO_0000234341" description="Tau-tubulin kinase 1">
    <location>
        <begin position="1"/>
        <end position="1321"/>
    </location>
</feature>
<feature type="domain" description="Protein kinase" evidence="3">
    <location>
        <begin position="34"/>
        <end position="297"/>
    </location>
</feature>
<feature type="region of interest" description="Disordered" evidence="4">
    <location>
        <begin position="363"/>
        <end position="397"/>
    </location>
</feature>
<feature type="region of interest" description="Disordered" evidence="4">
    <location>
        <begin position="416"/>
        <end position="677"/>
    </location>
</feature>
<feature type="region of interest" description="Disordered" evidence="4">
    <location>
        <begin position="714"/>
        <end position="908"/>
    </location>
</feature>
<feature type="region of interest" description="Disordered" evidence="4">
    <location>
        <begin position="997"/>
        <end position="1092"/>
    </location>
</feature>
<feature type="region of interest" description="Disordered" evidence="4">
    <location>
        <begin position="1104"/>
        <end position="1321"/>
    </location>
</feature>
<feature type="coiled-coil region" evidence="2">
    <location>
        <begin position="685"/>
        <end position="781"/>
    </location>
</feature>
<feature type="compositionally biased region" description="Basic and acidic residues" evidence="4">
    <location>
        <begin position="458"/>
        <end position="478"/>
    </location>
</feature>
<feature type="compositionally biased region" description="Polar residues" evidence="4">
    <location>
        <begin position="484"/>
        <end position="495"/>
    </location>
</feature>
<feature type="compositionally biased region" description="Basic and acidic residues" evidence="4">
    <location>
        <begin position="540"/>
        <end position="554"/>
    </location>
</feature>
<feature type="compositionally biased region" description="Basic and acidic residues" evidence="4">
    <location>
        <begin position="573"/>
        <end position="588"/>
    </location>
</feature>
<feature type="compositionally biased region" description="Low complexity" evidence="4">
    <location>
        <begin position="637"/>
        <end position="646"/>
    </location>
</feature>
<feature type="compositionally biased region" description="Low complexity" evidence="4">
    <location>
        <begin position="718"/>
        <end position="729"/>
    </location>
</feature>
<feature type="compositionally biased region" description="Acidic residues" evidence="4">
    <location>
        <begin position="733"/>
        <end position="772"/>
    </location>
</feature>
<feature type="compositionally biased region" description="Basic and acidic residues" evidence="4">
    <location>
        <begin position="792"/>
        <end position="801"/>
    </location>
</feature>
<feature type="compositionally biased region" description="Polar residues" evidence="4">
    <location>
        <begin position="874"/>
        <end position="891"/>
    </location>
</feature>
<feature type="compositionally biased region" description="Low complexity" evidence="4">
    <location>
        <begin position="1104"/>
        <end position="1114"/>
    </location>
</feature>
<feature type="compositionally biased region" description="Polar residues" evidence="4">
    <location>
        <begin position="1187"/>
        <end position="1199"/>
    </location>
</feature>
<feature type="compositionally biased region" description="Low complexity" evidence="4">
    <location>
        <begin position="1234"/>
        <end position="1251"/>
    </location>
</feature>
<feature type="compositionally biased region" description="Low complexity" evidence="4">
    <location>
        <begin position="1277"/>
        <end position="1291"/>
    </location>
</feature>
<feature type="compositionally biased region" description="Gly residues" evidence="4">
    <location>
        <begin position="1310"/>
        <end position="1321"/>
    </location>
</feature>
<feature type="active site" description="Proton acceptor" evidence="3">
    <location>
        <position position="154"/>
    </location>
</feature>
<feature type="binding site" evidence="3">
    <location>
        <begin position="40"/>
        <end position="48"/>
    </location>
    <ligand>
        <name>ATP</name>
        <dbReference type="ChEBI" id="CHEBI:30616"/>
    </ligand>
</feature>
<feature type="binding site" evidence="3">
    <location>
        <position position="63"/>
    </location>
    <ligand>
        <name>ATP</name>
        <dbReference type="ChEBI" id="CHEBI:30616"/>
    </ligand>
</feature>
<feature type="modified residue" description="Phosphoserine" evidence="1">
    <location>
        <position position="441"/>
    </location>
</feature>
<feature type="modified residue" description="Phosphoserine" evidence="1">
    <location>
        <position position="540"/>
    </location>
</feature>
<feature type="splice variant" id="VSP_026497" description="In isoform 2." evidence="7">
    <location>
        <begin position="1"/>
        <end position="51"/>
    </location>
</feature>
<feature type="splice variant" id="VSP_026498" description="In isoform 2." evidence="7">
    <original>TVRPRGRSMQALAEEDLQHLPPQPLPPQLSQGDGRSETSQPPTPGSPSHSPLHSGPRPRRRESDPTGPQRQVFSVAPPFEV</original>
    <variation>FPLTPALGTPPSTERVGPHRPTETVGGGQTLGALPPAVQPPATTGVLRVLLLHAGDGALPSPRRRRLLGLLRFPHSAQPLG</variation>
    <location>
        <begin position="592"/>
        <end position="672"/>
    </location>
</feature>
<feature type="splice variant" id="VSP_026499" description="In isoform 2." evidence="7">
    <location>
        <begin position="673"/>
        <end position="1321"/>
    </location>
</feature>
<feature type="sequence variant" id="VAR_041252" description="In dbSNP:rs34993661." evidence="6">
    <original>P</original>
    <variation>L</variation>
    <location>
        <position position="613"/>
    </location>
</feature>
<feature type="sequence variant" id="VAR_041253" description="In dbSNP:rs3800294." evidence="6">
    <original>G</original>
    <variation>A</variation>
    <location>
        <position position="623"/>
    </location>
</feature>
<feature type="sequence variant" id="VAR_041254" description="In dbSNP:rs35175743." evidence="6">
    <original>P</original>
    <variation>R</variation>
    <location>
        <position position="649"/>
    </location>
</feature>
<feature type="sequence variant" id="VAR_041255" description="In dbSNP:rs56377340." evidence="6">
    <original>D</original>
    <variation>E</variation>
    <location>
        <position position="741"/>
    </location>
</feature>
<feature type="sequence variant" id="VAR_041256" description="In dbSNP:rs3800295." evidence="6">
    <original>E</original>
    <variation>D</variation>
    <location>
        <position position="744"/>
    </location>
</feature>
<feature type="sequence variant" id="VAR_041257" description="In a lung large cell carcinoma sample; somatic mutation." evidence="6">
    <original>S</original>
    <variation>F</variation>
    <location>
        <position position="806"/>
    </location>
</feature>
<feature type="sequence variant" id="VAR_041258" description="In a metastatic melanoma sample; somatic mutation; dbSNP:rs267601046." evidence="6">
    <original>P</original>
    <variation>S</variation>
    <location>
        <position position="855"/>
    </location>
</feature>
<feature type="sequence variant" id="VAR_041259" description="In dbSNP:rs3800297." evidence="6">
    <original>K</original>
    <variation>R</variation>
    <location>
        <position position="1145"/>
    </location>
</feature>
<feature type="sequence variant" id="VAR_041260" description="In dbSNP:rs3800298." evidence="6">
    <original>L</original>
    <variation>S</variation>
    <location>
        <position position="1184"/>
    </location>
</feature>
<feature type="sequence conflict" description="In Ref. 1; BAE78660." evidence="8" ref="1">
    <original>L</original>
    <variation>V</variation>
    <location>
        <position position="37"/>
    </location>
</feature>
<feature type="sequence conflict" description="In Ref. 2; BAD18405." evidence="8" ref="2">
    <original>E</original>
    <variation>G</variation>
    <location>
        <position position="402"/>
    </location>
</feature>
<feature type="sequence conflict" description="In Ref. 5; AAH36764." evidence="8" ref="5">
    <original>S</original>
    <variation>SS</variation>
    <location>
        <position position="1190"/>
    </location>
</feature>
<feature type="turn" evidence="12">
    <location>
        <begin position="31"/>
        <end position="33"/>
    </location>
</feature>
<feature type="strand" evidence="12">
    <location>
        <begin position="34"/>
        <end position="42"/>
    </location>
</feature>
<feature type="strand" evidence="11">
    <location>
        <begin position="43"/>
        <end position="45"/>
    </location>
</feature>
<feature type="strand" evidence="12">
    <location>
        <begin position="47"/>
        <end position="53"/>
    </location>
</feature>
<feature type="turn" evidence="12">
    <location>
        <begin position="54"/>
        <end position="56"/>
    </location>
</feature>
<feature type="strand" evidence="12">
    <location>
        <begin position="58"/>
        <end position="66"/>
    </location>
</feature>
<feature type="helix" evidence="12">
    <location>
        <begin position="74"/>
        <end position="83"/>
    </location>
</feature>
<feature type="turn" evidence="12">
    <location>
        <begin position="84"/>
        <end position="86"/>
    </location>
</feature>
<feature type="strand" evidence="14">
    <location>
        <begin position="87"/>
        <end position="90"/>
    </location>
</feature>
<feature type="strand" evidence="12">
    <location>
        <begin position="93"/>
        <end position="98"/>
    </location>
</feature>
<feature type="strand" evidence="12">
    <location>
        <begin position="100"/>
        <end position="108"/>
    </location>
</feature>
<feature type="helix" evidence="12">
    <location>
        <begin position="114"/>
        <end position="119"/>
    </location>
</feature>
<feature type="helix" evidence="12">
    <location>
        <begin position="128"/>
        <end position="147"/>
    </location>
</feature>
<feature type="helix" evidence="12">
    <location>
        <begin position="157"/>
        <end position="159"/>
    </location>
</feature>
<feature type="strand" evidence="12">
    <location>
        <begin position="160"/>
        <end position="162"/>
    </location>
</feature>
<feature type="turn" evidence="12">
    <location>
        <begin position="166"/>
        <end position="170"/>
    </location>
</feature>
<feature type="strand" evidence="12">
    <location>
        <begin position="172"/>
        <end position="174"/>
    </location>
</feature>
<feature type="helix" evidence="13">
    <location>
        <begin position="177"/>
        <end position="179"/>
    </location>
</feature>
<feature type="strand" evidence="10">
    <location>
        <begin position="188"/>
        <end position="190"/>
    </location>
</feature>
<feature type="helix" evidence="12">
    <location>
        <begin position="203"/>
        <end position="205"/>
    </location>
</feature>
<feature type="helix" evidence="12">
    <location>
        <begin position="208"/>
        <end position="211"/>
    </location>
</feature>
<feature type="helix" evidence="12">
    <location>
        <begin position="218"/>
        <end position="234"/>
    </location>
</feature>
<feature type="turn" evidence="12">
    <location>
        <begin position="238"/>
        <end position="241"/>
    </location>
</feature>
<feature type="helix" evidence="12">
    <location>
        <begin position="245"/>
        <end position="254"/>
    </location>
</feature>
<feature type="helix" evidence="12">
    <location>
        <begin position="257"/>
        <end position="261"/>
    </location>
</feature>
<feature type="strand" evidence="9">
    <location>
        <begin position="262"/>
        <end position="264"/>
    </location>
</feature>
<feature type="helix" evidence="12">
    <location>
        <begin position="268"/>
        <end position="277"/>
    </location>
</feature>
<feature type="strand" evidence="12">
    <location>
        <begin position="280"/>
        <end position="282"/>
    </location>
</feature>
<feature type="helix" evidence="12">
    <location>
        <begin position="286"/>
        <end position="299"/>
    </location>
</feature>
<feature type="helix" evidence="13">
    <location>
        <begin position="309"/>
        <end position="311"/>
    </location>
</feature>
<feature type="turn" evidence="14">
    <location>
        <begin position="312"/>
        <end position="315"/>
    </location>
</feature>
<evidence type="ECO:0000250" key="1">
    <source>
        <dbReference type="UniProtKB" id="Q6PCN3"/>
    </source>
</evidence>
<evidence type="ECO:0000255" key="2"/>
<evidence type="ECO:0000255" key="3">
    <source>
        <dbReference type="PROSITE-ProRule" id="PRU00159"/>
    </source>
</evidence>
<evidence type="ECO:0000256" key="4">
    <source>
        <dbReference type="SAM" id="MobiDB-lite"/>
    </source>
</evidence>
<evidence type="ECO:0000269" key="5">
    <source>
    </source>
</evidence>
<evidence type="ECO:0000269" key="6">
    <source>
    </source>
</evidence>
<evidence type="ECO:0000303" key="7">
    <source>
    </source>
</evidence>
<evidence type="ECO:0000305" key="8"/>
<evidence type="ECO:0007829" key="9">
    <source>
        <dbReference type="PDB" id="4BTK"/>
    </source>
</evidence>
<evidence type="ECO:0007829" key="10">
    <source>
        <dbReference type="PDB" id="4BTM"/>
    </source>
</evidence>
<evidence type="ECO:0007829" key="11">
    <source>
        <dbReference type="PDB" id="4NFM"/>
    </source>
</evidence>
<evidence type="ECO:0007829" key="12">
    <source>
        <dbReference type="PDB" id="4NFN"/>
    </source>
</evidence>
<evidence type="ECO:0007829" key="13">
    <source>
        <dbReference type="PDB" id="7JXY"/>
    </source>
</evidence>
<evidence type="ECO:0007829" key="14">
    <source>
        <dbReference type="PDB" id="7ZHO"/>
    </source>
</evidence>